<comment type="function">
    <text evidence="3 4">Catalyzes the epimerization of trans-4-hydroxy-L-proline (t4LHyp) to cis-4-hydroxy-D-proline (c4DHyp). Is likely involved in a degradation pathway that converts t4LHyp to alpha-ketoglutarate, which would allow P.denitrificans to grow on t4LHyp as a sole carbon source (PubMed:24980702). Also seems to be involved in an alternative catabolic pathway that degrades trans-4-hydroxy-L-proline betaine (tHyp-B) to alpha-ketoglutarate; this pathway would permit the utilization of tHyp-B as a sole carbon and nitrogen source (PubMed:24056934).</text>
</comment>
<comment type="catalytic activity">
    <reaction evidence="3 4">
        <text>trans-4-hydroxy-L-proline = cis-4-hydroxy-D-proline</text>
        <dbReference type="Rhea" id="RHEA:21152"/>
        <dbReference type="ChEBI" id="CHEBI:57690"/>
        <dbReference type="ChEBI" id="CHEBI:58375"/>
        <dbReference type="EC" id="5.1.1.8"/>
    </reaction>
</comment>
<comment type="biophysicochemical properties">
    <kinetics>
        <KM evidence="3">24 mM for trans-4-hydroxy-L-proline</KM>
        <KM evidence="4">25 mM for trans-4-hydroxy-L-proline</KM>
        <text evidence="3 4">kcat is 15 sec(-1) (PubMed:24056934). kcat is 16 sec(-1) (PubMed:24980702).</text>
    </kinetics>
</comment>
<comment type="subunit">
    <text evidence="1">Homodimer.</text>
</comment>
<comment type="induction">
    <text evidence="4">Is up-regulated when the bacterium is grown on t4LHyp as sole carbon source.</text>
</comment>
<comment type="disruption phenotype">
    <text evidence="3">Cells lacking both hpbD and hypF are unable to utilize tHyp-B or t4LHyp as sole carbon source.</text>
</comment>
<comment type="similarity">
    <text evidence="7">Belongs to the proline racemase family.</text>
</comment>
<accession>A1BBM5</accession>
<dbReference type="EC" id="5.1.1.8" evidence="3 4"/>
<dbReference type="EMBL" id="CP000491">
    <property type="protein sequence ID" value="ABL72919.1"/>
    <property type="molecule type" value="Genomic_DNA"/>
</dbReference>
<dbReference type="RefSeq" id="WP_011751078.1">
    <property type="nucleotide sequence ID" value="NC_008688.1"/>
</dbReference>
<dbReference type="SMR" id="A1BBM5"/>
<dbReference type="EnsemblBacteria" id="ABL72919">
    <property type="protein sequence ID" value="ABL72919"/>
    <property type="gene ID" value="Pden_4859"/>
</dbReference>
<dbReference type="GeneID" id="93454285"/>
<dbReference type="KEGG" id="pde:Pden_4859"/>
<dbReference type="eggNOG" id="COG3938">
    <property type="taxonomic scope" value="Bacteria"/>
</dbReference>
<dbReference type="HOGENOM" id="CLU_036729_0_0_5"/>
<dbReference type="OrthoDB" id="181267at2"/>
<dbReference type="SABIO-RK" id="A1BBM5"/>
<dbReference type="Proteomes" id="UP000000361">
    <property type="component" value="Plasmid pPD1222"/>
</dbReference>
<dbReference type="GO" id="GO:0047580">
    <property type="term" value="F:4-hydroxyproline epimerase activity"/>
    <property type="evidence" value="ECO:0000314"/>
    <property type="project" value="UniProtKB"/>
</dbReference>
<dbReference type="GO" id="GO:0006579">
    <property type="term" value="P:amino-acid betaine catabolic process"/>
    <property type="evidence" value="ECO:0000315"/>
    <property type="project" value="UniProtKB"/>
</dbReference>
<dbReference type="FunFam" id="3.10.310.10:FF:000005">
    <property type="entry name" value="Proline racemase"/>
    <property type="match status" value="1"/>
</dbReference>
<dbReference type="Gene3D" id="3.10.310.10">
    <property type="entry name" value="Diaminopimelate Epimerase, Chain A, domain 1"/>
    <property type="match status" value="2"/>
</dbReference>
<dbReference type="InterPro" id="IPR008794">
    <property type="entry name" value="Pro_racemase_fam"/>
</dbReference>
<dbReference type="NCBIfam" id="NF010578">
    <property type="entry name" value="PRK13971.1"/>
    <property type="match status" value="1"/>
</dbReference>
<dbReference type="PANTHER" id="PTHR33442:SF5">
    <property type="entry name" value="BIFUNCTIONAL TRANS-3-HYDROXY-L-PROLINE DEHYDRATASE_2-EPIMERASE"/>
    <property type="match status" value="1"/>
</dbReference>
<dbReference type="PANTHER" id="PTHR33442">
    <property type="entry name" value="TRANS-3-HYDROXY-L-PROLINE DEHYDRATASE"/>
    <property type="match status" value="1"/>
</dbReference>
<dbReference type="Pfam" id="PF05544">
    <property type="entry name" value="Pro_racemase"/>
    <property type="match status" value="1"/>
</dbReference>
<dbReference type="PIRSF" id="PIRSF029792">
    <property type="entry name" value="Pro_racemase"/>
    <property type="match status" value="1"/>
</dbReference>
<dbReference type="SFLD" id="SFLDS00028">
    <property type="entry name" value="Proline_Racemase"/>
    <property type="match status" value="1"/>
</dbReference>
<dbReference type="SUPFAM" id="SSF54506">
    <property type="entry name" value="Diaminopimelate epimerase-like"/>
    <property type="match status" value="1"/>
</dbReference>
<protein>
    <recommendedName>
        <fullName evidence="5 6">4-hydroxyproline 2-epimerase</fullName>
        <shortName evidence="5">4Hyp 2-epimerase</shortName>
        <shortName evidence="6">4HypE</shortName>
        <ecNumber evidence="3 4">5.1.1.8</ecNumber>
    </recommendedName>
</protein>
<organism>
    <name type="scientific">Paracoccus denitrificans (strain Pd 1222)</name>
    <dbReference type="NCBI Taxonomy" id="318586"/>
    <lineage>
        <taxon>Bacteria</taxon>
        <taxon>Pseudomonadati</taxon>
        <taxon>Pseudomonadota</taxon>
        <taxon>Alphaproteobacteria</taxon>
        <taxon>Rhodobacterales</taxon>
        <taxon>Paracoccaceae</taxon>
        <taxon>Paracoccus</taxon>
    </lineage>
</organism>
<evidence type="ECO:0000250" key="1"/>
<evidence type="ECO:0000250" key="2">
    <source>
        <dbReference type="UniProtKB" id="Q4KGU2"/>
    </source>
</evidence>
<evidence type="ECO:0000269" key="3">
    <source>
    </source>
</evidence>
<evidence type="ECO:0000269" key="4">
    <source>
    </source>
</evidence>
<evidence type="ECO:0000303" key="5">
    <source>
    </source>
</evidence>
<evidence type="ECO:0000303" key="6">
    <source>
    </source>
</evidence>
<evidence type="ECO:0000305" key="7"/>
<sequence length="334" mass="36301">MTQYIFPCIDGHTCGNPVRLVAGGAPRLEGATMLEKRAHFLREFDWIRTGLMFEPRGHDMMSGAILYPPTRGDCDVAVLYIETSGCLPMCGHGTIGTITMGIENGLIVPRTPGRLSIETPAGKVDIEYRQEGRHVEEVRLTNVPGFLYAEGLTAEVEGLGEIVVDVAYGGNFYAIVEPQKNFRDMADHTAGELIGWSLTLRAALNQKYEFTHPEHPQINGLSHIQWTGAPTVPGAHARNAVFYGDKAIDRSPCGTGTSARMAQLAARGRLGVGDEFWHESIIGSIFKGRIEAAATVAGRDAIIPSIAGWARQTGLNTIFIDAERDPFAHGFVVK</sequence>
<reference key="1">
    <citation type="submission" date="2006-12" db="EMBL/GenBank/DDBJ databases">
        <title>Complete sequence of plasmid 1 of Paracoccus denitrificans PD1222.</title>
        <authorList>
            <person name="Copeland A."/>
            <person name="Lucas S."/>
            <person name="Lapidus A."/>
            <person name="Barry K."/>
            <person name="Detter J.C."/>
            <person name="Glavina del Rio T."/>
            <person name="Hammon N."/>
            <person name="Israni S."/>
            <person name="Dalin E."/>
            <person name="Tice H."/>
            <person name="Pitluck S."/>
            <person name="Munk A.C."/>
            <person name="Brettin T."/>
            <person name="Bruce D."/>
            <person name="Han C."/>
            <person name="Tapia R."/>
            <person name="Gilna P."/>
            <person name="Schmutz J."/>
            <person name="Larimer F."/>
            <person name="Land M."/>
            <person name="Hauser L."/>
            <person name="Kyrpides N."/>
            <person name="Lykidis A."/>
            <person name="Spiro S."/>
            <person name="Richardson D.J."/>
            <person name="Moir J.W.B."/>
            <person name="Ferguson S.J."/>
            <person name="van Spanning R.J.M."/>
            <person name="Richardson P."/>
        </authorList>
    </citation>
    <scope>NUCLEOTIDE SEQUENCE [LARGE SCALE GENOMIC DNA]</scope>
    <source>
        <strain>Pd 1222</strain>
    </source>
</reference>
<reference key="2">
    <citation type="journal article" date="2013" name="Nature">
        <title>Discovery of new enzymes and metabolic pathways by using structure and genome context.</title>
        <authorList>
            <person name="Zhao S."/>
            <person name="Kumar R."/>
            <person name="Sakai A."/>
            <person name="Vetting M.W."/>
            <person name="Wood B.M."/>
            <person name="Brown S."/>
            <person name="Bonanno J.B."/>
            <person name="Hillerich B.S."/>
            <person name="Seidel R.D."/>
            <person name="Babbitt P.C."/>
            <person name="Almo S.C."/>
            <person name="Sweedler J.V."/>
            <person name="Gerlt J.A."/>
            <person name="Cronan J.E."/>
            <person name="Jacobson M.P."/>
        </authorList>
    </citation>
    <scope>FUNCTION</scope>
    <scope>CATALYTIC ACTIVITY</scope>
    <scope>KINETIC PARAMETERS</scope>
    <scope>GENE NAME</scope>
    <scope>DISRUPTION PHENOTYPE</scope>
    <scope>PATHWAY</scope>
    <source>
        <strain>Pd 1222</strain>
    </source>
</reference>
<reference key="3">
    <citation type="journal article" date="2014" name="Elife">
        <title>Prediction and characterization of enzymatic activities guided by sequence similarity and genome neighborhood networks.</title>
        <authorList>
            <person name="Zhao S."/>
            <person name="Sakai A."/>
            <person name="Zhang X."/>
            <person name="Vetting M.W."/>
            <person name="Kumar R."/>
            <person name="Hillerich B."/>
            <person name="San Francisco B."/>
            <person name="Solbiati J."/>
            <person name="Steves A."/>
            <person name="Brown S."/>
            <person name="Akiva E."/>
            <person name="Barber A."/>
            <person name="Seidel R.D."/>
            <person name="Babbitt P.C."/>
            <person name="Almo S.C."/>
            <person name="Gerlt J.A."/>
            <person name="Jacobson M.P."/>
        </authorList>
    </citation>
    <scope>FUNCTION</scope>
    <scope>CATALYTIC ACTIVITY</scope>
    <scope>BIOPHYSICOCHEMICAL PROPERTIES</scope>
    <scope>INDUCTION</scope>
</reference>
<geneLocation type="plasmid">
    <name>pPD1222</name>
</geneLocation>
<gene>
    <name type="primary">hypF</name>
    <name type="ordered locus">Pden_4859</name>
</gene>
<feature type="chain" id="PRO_0000425280" description="4-hydroxyproline 2-epimerase">
    <location>
        <begin position="1"/>
        <end position="334"/>
    </location>
</feature>
<feature type="active site" description="Proton acceptor" evidence="2">
    <location>
        <position position="90"/>
    </location>
</feature>
<feature type="active site" description="Proton donor" evidence="2">
    <location>
        <position position="253"/>
    </location>
</feature>
<feature type="binding site" evidence="2">
    <location>
        <begin position="91"/>
        <end position="92"/>
    </location>
    <ligand>
        <name>substrate</name>
    </ligand>
</feature>
<feature type="binding site" evidence="2">
    <location>
        <position position="223"/>
    </location>
    <ligand>
        <name>substrate</name>
    </ligand>
</feature>
<feature type="binding site" evidence="2">
    <location>
        <position position="249"/>
    </location>
    <ligand>
        <name>substrate</name>
    </ligand>
</feature>
<feature type="binding site" evidence="2">
    <location>
        <begin position="254"/>
        <end position="255"/>
    </location>
    <ligand>
        <name>substrate</name>
    </ligand>
</feature>
<keyword id="KW-0413">Isomerase</keyword>
<keyword id="KW-0614">Plasmid</keyword>
<keyword id="KW-1185">Reference proteome</keyword>
<proteinExistence type="evidence at protein level"/>
<name>4HYPE_PARDP</name>